<organism>
    <name type="scientific">Rattus norvegicus</name>
    <name type="common">Rat</name>
    <dbReference type="NCBI Taxonomy" id="10116"/>
    <lineage>
        <taxon>Eukaryota</taxon>
        <taxon>Metazoa</taxon>
        <taxon>Chordata</taxon>
        <taxon>Craniata</taxon>
        <taxon>Vertebrata</taxon>
        <taxon>Euteleostomi</taxon>
        <taxon>Mammalia</taxon>
        <taxon>Eutheria</taxon>
        <taxon>Euarchontoglires</taxon>
        <taxon>Glires</taxon>
        <taxon>Rodentia</taxon>
        <taxon>Myomorpha</taxon>
        <taxon>Muroidea</taxon>
        <taxon>Muridae</taxon>
        <taxon>Murinae</taxon>
        <taxon>Rattus</taxon>
    </lineage>
</organism>
<protein>
    <recommendedName>
        <fullName>Paired box protein Pax-4</fullName>
    </recommendedName>
</protein>
<reference key="1">
    <citation type="journal article" date="1998" name="Biochem. Biophys. Res. Commun.">
        <title>Molecular cloning of rat Pax4: identification of four isoforms in rat insulinoma cells.</title>
        <authorList>
            <person name="Tokuyama Y."/>
            <person name="Yagui K."/>
            <person name="Sakurai K."/>
            <person name="Hashimoto N."/>
            <person name="Saito Y."/>
            <person name="Kanatsuka A."/>
        </authorList>
    </citation>
    <scope>NUCLEOTIDE SEQUENCE [MRNA] (ISOFORMS A; B; C AND D)</scope>
    <source>
        <tissue>Insulinoma</tissue>
    </source>
</reference>
<reference key="2">
    <citation type="journal article" date="1999" name="FEBS Lett.">
        <title>Inhibitory effect of Pax4 on the human insulin and islet amyloid polypeptide (IAPP) promoters.</title>
        <authorList>
            <person name="Campbell S.C."/>
            <person name="Cragg H."/>
            <person name="Elrick L.J."/>
            <person name="Macfarlane W.M."/>
            <person name="Shennan K.I."/>
            <person name="Docherty K."/>
        </authorList>
    </citation>
    <scope>NUCLEOTIDE SEQUENCE [MRNA] (ISOFORMS A AND C)</scope>
    <source>
        <tissue>Insulinoma</tissue>
    </source>
</reference>
<comment type="function">
    <text evidence="1">Plays an important role in the differentiation and development of pancreatic islet beta cells. Transcriptional repressor that competes with PAX6 in binding to a common element in the glucagon, insulin and somatostatin promoters (By similarity).</text>
</comment>
<comment type="subcellular location">
    <subcellularLocation>
        <location>Nucleus</location>
    </subcellularLocation>
</comment>
<comment type="alternative products">
    <event type="alternative splicing"/>
    <isoform>
        <id>O88436-1</id>
        <name>A</name>
        <sequence type="displayed"/>
    </isoform>
    <isoform>
        <id>O88436-2</id>
        <name>B</name>
        <sequence type="described" ref="VSP_002363"/>
    </isoform>
    <isoform>
        <id>O88436-3</id>
        <name>C</name>
        <sequence type="described" ref="VSP_002364 VSP_002365"/>
    </isoform>
    <isoform>
        <id>O88436-4</id>
        <name>D</name>
        <sequence type="described" ref="VSP_002363 VSP_002364 VSP_002365"/>
    </isoform>
</comment>
<comment type="tissue specificity">
    <text>Specifically expressed in pancreatic islets.</text>
</comment>
<comment type="similarity">
    <text evidence="6">Belongs to the paired homeobox family.</text>
</comment>
<evidence type="ECO:0000250" key="1"/>
<evidence type="ECO:0000255" key="2">
    <source>
        <dbReference type="PROSITE-ProRule" id="PRU00108"/>
    </source>
</evidence>
<evidence type="ECO:0000255" key="3">
    <source>
        <dbReference type="PROSITE-ProRule" id="PRU00381"/>
    </source>
</evidence>
<evidence type="ECO:0000303" key="4">
    <source>
    </source>
</evidence>
<evidence type="ECO:0000303" key="5">
    <source>
    </source>
</evidence>
<evidence type="ECO:0000305" key="6"/>
<dbReference type="EMBL" id="AF053100">
    <property type="protein sequence ID" value="AAC40195.1"/>
    <property type="molecule type" value="mRNA"/>
</dbReference>
<dbReference type="EMBL" id="AF053101">
    <property type="protein sequence ID" value="AAC40196.1"/>
    <property type="molecule type" value="mRNA"/>
</dbReference>
<dbReference type="EMBL" id="AF053102">
    <property type="protein sequence ID" value="AAC40197.1"/>
    <property type="molecule type" value="mRNA"/>
</dbReference>
<dbReference type="EMBL" id="AF053103">
    <property type="protein sequence ID" value="AAC40198.1"/>
    <property type="molecule type" value="mRNA"/>
</dbReference>
<dbReference type="EMBL" id="AF198155">
    <property type="protein sequence ID" value="AAF04858.1"/>
    <property type="molecule type" value="mRNA"/>
</dbReference>
<dbReference type="EMBL" id="AF198156">
    <property type="protein sequence ID" value="AAF04859.1"/>
    <property type="molecule type" value="mRNA"/>
</dbReference>
<dbReference type="PIR" id="JE0202">
    <property type="entry name" value="JE0202"/>
</dbReference>
<dbReference type="RefSeq" id="NP_113987.1">
    <molecule id="O88436-1"/>
    <property type="nucleotide sequence ID" value="NM_031799.1"/>
</dbReference>
<dbReference type="RefSeq" id="XP_006236294.1">
    <molecule id="O88436-1"/>
    <property type="nucleotide sequence ID" value="XM_006236232.5"/>
</dbReference>
<dbReference type="RefSeq" id="XP_006236295.1">
    <property type="nucleotide sequence ID" value="XM_006236233.3"/>
</dbReference>
<dbReference type="RefSeq" id="XP_017448403.1">
    <property type="nucleotide sequence ID" value="XM_017592914.1"/>
</dbReference>
<dbReference type="RefSeq" id="XP_017448405.1">
    <property type="nucleotide sequence ID" value="XM_017592916.1"/>
</dbReference>
<dbReference type="RefSeq" id="XP_063142832.1">
    <molecule id="O88436-2"/>
    <property type="nucleotide sequence ID" value="XM_063286762.1"/>
</dbReference>
<dbReference type="SMR" id="O88436"/>
<dbReference type="FunCoup" id="O88436">
    <property type="interactions" value="116"/>
</dbReference>
<dbReference type="STRING" id="10116.ENSRNOP00000010658"/>
<dbReference type="CarbonylDB" id="O88436"/>
<dbReference type="GlyGen" id="O88436">
    <property type="glycosylation" value="1 site"/>
</dbReference>
<dbReference type="PhosphoSitePlus" id="O88436"/>
<dbReference type="PaxDb" id="10116-ENSRNOP00000010658"/>
<dbReference type="Ensembl" id="ENSRNOT00000010658.7">
    <molecule id="O88436-1"/>
    <property type="protein sequence ID" value="ENSRNOP00000010658.4"/>
    <property type="gene ID" value="ENSRNOG00000008020.8"/>
</dbReference>
<dbReference type="Ensembl" id="ENSRNOT00000113994.1">
    <molecule id="O88436-2"/>
    <property type="protein sequence ID" value="ENSRNOP00000082503.1"/>
    <property type="gene ID" value="ENSRNOG00000008020.8"/>
</dbReference>
<dbReference type="GeneID" id="83630"/>
<dbReference type="KEGG" id="rno:83630"/>
<dbReference type="UCSC" id="RGD:620433">
    <molecule id="O88436-1"/>
    <property type="organism name" value="rat"/>
</dbReference>
<dbReference type="AGR" id="RGD:620433"/>
<dbReference type="CTD" id="5078"/>
<dbReference type="RGD" id="620433">
    <property type="gene designation" value="Pax4"/>
</dbReference>
<dbReference type="eggNOG" id="KOG0849">
    <property type="taxonomic scope" value="Eukaryota"/>
</dbReference>
<dbReference type="GeneTree" id="ENSGT00940000161709"/>
<dbReference type="HOGENOM" id="CLU_019281_1_2_1"/>
<dbReference type="InParanoid" id="O88436"/>
<dbReference type="OMA" id="RYYRTGI"/>
<dbReference type="OrthoDB" id="3225452at2759"/>
<dbReference type="PhylomeDB" id="O88436"/>
<dbReference type="PRO" id="PR:O88436"/>
<dbReference type="Proteomes" id="UP000002494">
    <property type="component" value="Chromosome 4"/>
</dbReference>
<dbReference type="Bgee" id="ENSRNOG00000008020">
    <property type="expression patterns" value="Expressed in duodenum and 3 other cell types or tissues"/>
</dbReference>
<dbReference type="GO" id="GO:0005634">
    <property type="term" value="C:nucleus"/>
    <property type="evidence" value="ECO:0007669"/>
    <property type="project" value="UniProtKB-SubCell"/>
</dbReference>
<dbReference type="GO" id="GO:0003677">
    <property type="term" value="F:DNA binding"/>
    <property type="evidence" value="ECO:0000266"/>
    <property type="project" value="RGD"/>
</dbReference>
<dbReference type="GO" id="GO:0000981">
    <property type="term" value="F:DNA-binding transcription factor activity, RNA polymerase II-specific"/>
    <property type="evidence" value="ECO:0000318"/>
    <property type="project" value="GO_Central"/>
</dbReference>
<dbReference type="GO" id="GO:0001227">
    <property type="term" value="F:DNA-binding transcription repressor activity, RNA polymerase II-specific"/>
    <property type="evidence" value="ECO:0000266"/>
    <property type="project" value="RGD"/>
</dbReference>
<dbReference type="GO" id="GO:0003690">
    <property type="term" value="F:double-stranded DNA binding"/>
    <property type="evidence" value="ECO:0000314"/>
    <property type="project" value="RGD"/>
</dbReference>
<dbReference type="GO" id="GO:0000978">
    <property type="term" value="F:RNA polymerase II cis-regulatory region sequence-specific DNA binding"/>
    <property type="evidence" value="ECO:0000266"/>
    <property type="project" value="RGD"/>
</dbReference>
<dbReference type="GO" id="GO:1990837">
    <property type="term" value="F:sequence-specific double-stranded DNA binding"/>
    <property type="evidence" value="ECO:0000266"/>
    <property type="project" value="RGD"/>
</dbReference>
<dbReference type="GO" id="GO:0007420">
    <property type="term" value="P:brain development"/>
    <property type="evidence" value="ECO:0000318"/>
    <property type="project" value="GO_Central"/>
</dbReference>
<dbReference type="GO" id="GO:0007623">
    <property type="term" value="P:circadian rhythm"/>
    <property type="evidence" value="ECO:0000270"/>
    <property type="project" value="RGD"/>
</dbReference>
<dbReference type="GO" id="GO:0030900">
    <property type="term" value="P:forebrain development"/>
    <property type="evidence" value="ECO:0000318"/>
    <property type="project" value="GO_Central"/>
</dbReference>
<dbReference type="GO" id="GO:0043066">
    <property type="term" value="P:negative regulation of apoptotic process"/>
    <property type="evidence" value="ECO:0000315"/>
    <property type="project" value="RGD"/>
</dbReference>
<dbReference type="GO" id="GO:0045892">
    <property type="term" value="P:negative regulation of DNA-templated transcription"/>
    <property type="evidence" value="ECO:0000314"/>
    <property type="project" value="RGD"/>
</dbReference>
<dbReference type="GO" id="GO:0000122">
    <property type="term" value="P:negative regulation of transcription by RNA polymerase II"/>
    <property type="evidence" value="ECO:0000266"/>
    <property type="project" value="RGD"/>
</dbReference>
<dbReference type="GO" id="GO:0030858">
    <property type="term" value="P:positive regulation of epithelial cell differentiation"/>
    <property type="evidence" value="ECO:0000266"/>
    <property type="project" value="RGD"/>
</dbReference>
<dbReference type="GO" id="GO:0045595">
    <property type="term" value="P:regulation of cell differentiation"/>
    <property type="evidence" value="ECO:0000266"/>
    <property type="project" value="RGD"/>
</dbReference>
<dbReference type="GO" id="GO:0006357">
    <property type="term" value="P:regulation of transcription by RNA polymerase II"/>
    <property type="evidence" value="ECO:0000318"/>
    <property type="project" value="GO_Central"/>
</dbReference>
<dbReference type="GO" id="GO:0051591">
    <property type="term" value="P:response to cAMP"/>
    <property type="evidence" value="ECO:0000270"/>
    <property type="project" value="RGD"/>
</dbReference>
<dbReference type="GO" id="GO:0009410">
    <property type="term" value="P:response to xenobiotic stimulus"/>
    <property type="evidence" value="ECO:0000270"/>
    <property type="project" value="RGD"/>
</dbReference>
<dbReference type="GO" id="GO:0060041">
    <property type="term" value="P:retina development in camera-type eye"/>
    <property type="evidence" value="ECO:0000270"/>
    <property type="project" value="RGD"/>
</dbReference>
<dbReference type="GO" id="GO:0007423">
    <property type="term" value="P:sensory organ development"/>
    <property type="evidence" value="ECO:0000318"/>
    <property type="project" value="GO_Central"/>
</dbReference>
<dbReference type="GO" id="GO:0003309">
    <property type="term" value="P:type B pancreatic cell differentiation"/>
    <property type="evidence" value="ECO:0000266"/>
    <property type="project" value="RGD"/>
</dbReference>
<dbReference type="CDD" id="cd00086">
    <property type="entry name" value="homeodomain"/>
    <property type="match status" value="1"/>
</dbReference>
<dbReference type="FunFam" id="1.10.10.60:FF:000226">
    <property type="entry name" value="Paired box gene 4"/>
    <property type="match status" value="1"/>
</dbReference>
<dbReference type="FunFam" id="1.10.10.10:FF:000003">
    <property type="entry name" value="Paired box protein Pax-6"/>
    <property type="match status" value="1"/>
</dbReference>
<dbReference type="FunFam" id="1.10.10.10:FF:000069">
    <property type="entry name" value="Paired box protein Pax-6"/>
    <property type="match status" value="1"/>
</dbReference>
<dbReference type="Gene3D" id="1.10.10.60">
    <property type="entry name" value="Homeodomain-like"/>
    <property type="match status" value="1"/>
</dbReference>
<dbReference type="Gene3D" id="1.10.10.10">
    <property type="entry name" value="Winged helix-like DNA-binding domain superfamily/Winged helix DNA-binding domain"/>
    <property type="match status" value="2"/>
</dbReference>
<dbReference type="InterPro" id="IPR001356">
    <property type="entry name" value="HD"/>
</dbReference>
<dbReference type="InterPro" id="IPR017970">
    <property type="entry name" value="Homeobox_CS"/>
</dbReference>
<dbReference type="InterPro" id="IPR009057">
    <property type="entry name" value="Homeodomain-like_sf"/>
</dbReference>
<dbReference type="InterPro" id="IPR043182">
    <property type="entry name" value="PAIRED_DNA-bd_dom"/>
</dbReference>
<dbReference type="InterPro" id="IPR001523">
    <property type="entry name" value="Paired_dom"/>
</dbReference>
<dbReference type="InterPro" id="IPR043565">
    <property type="entry name" value="PAX_fam"/>
</dbReference>
<dbReference type="InterPro" id="IPR036388">
    <property type="entry name" value="WH-like_DNA-bd_sf"/>
</dbReference>
<dbReference type="PANTHER" id="PTHR45636:SF8">
    <property type="entry name" value="PAIRED BOX PROTEIN PAX-4"/>
    <property type="match status" value="1"/>
</dbReference>
<dbReference type="PANTHER" id="PTHR45636">
    <property type="entry name" value="PAIRED BOX PROTEIN PAX-6-RELATED-RELATED"/>
    <property type="match status" value="1"/>
</dbReference>
<dbReference type="Pfam" id="PF00046">
    <property type="entry name" value="Homeodomain"/>
    <property type="match status" value="1"/>
</dbReference>
<dbReference type="Pfam" id="PF00292">
    <property type="entry name" value="PAX"/>
    <property type="match status" value="1"/>
</dbReference>
<dbReference type="PRINTS" id="PR00027">
    <property type="entry name" value="PAIREDBOX"/>
</dbReference>
<dbReference type="SMART" id="SM00389">
    <property type="entry name" value="HOX"/>
    <property type="match status" value="1"/>
</dbReference>
<dbReference type="SMART" id="SM00351">
    <property type="entry name" value="PAX"/>
    <property type="match status" value="1"/>
</dbReference>
<dbReference type="SUPFAM" id="SSF46689">
    <property type="entry name" value="Homeodomain-like"/>
    <property type="match status" value="2"/>
</dbReference>
<dbReference type="PROSITE" id="PS00027">
    <property type="entry name" value="HOMEOBOX_1"/>
    <property type="match status" value="1"/>
</dbReference>
<dbReference type="PROSITE" id="PS50071">
    <property type="entry name" value="HOMEOBOX_2"/>
    <property type="match status" value="1"/>
</dbReference>
<dbReference type="PROSITE" id="PS00034">
    <property type="entry name" value="PAIRED_1"/>
    <property type="match status" value="1"/>
</dbReference>
<dbReference type="PROSITE" id="PS51057">
    <property type="entry name" value="PAIRED_2"/>
    <property type="match status" value="1"/>
</dbReference>
<proteinExistence type="evidence at transcript level"/>
<keyword id="KW-0025">Alternative splicing</keyword>
<keyword id="KW-0217">Developmental protein</keyword>
<keyword id="KW-0221">Differentiation</keyword>
<keyword id="KW-0238">DNA-binding</keyword>
<keyword id="KW-0371">Homeobox</keyword>
<keyword id="KW-0539">Nucleus</keyword>
<keyword id="KW-0563">Paired box</keyword>
<keyword id="KW-1185">Reference proteome</keyword>
<keyword id="KW-0678">Repressor</keyword>
<keyword id="KW-0804">Transcription</keyword>
<keyword id="KW-0805">Transcription regulation</keyword>
<name>PAX4_RAT</name>
<feature type="chain" id="PRO_0000050182" description="Paired box protein Pax-4">
    <location>
        <begin position="1"/>
        <end position="349"/>
    </location>
</feature>
<feature type="DNA-binding region" description="Paired" evidence="3">
    <location>
        <begin position="5"/>
        <end position="131"/>
    </location>
</feature>
<feature type="DNA-binding region" description="Homeobox" evidence="2">
    <location>
        <begin position="170"/>
        <end position="229"/>
    </location>
</feature>
<feature type="region of interest" description="PAI subdomain" evidence="3">
    <location>
        <begin position="8"/>
        <end position="64"/>
    </location>
</feature>
<feature type="region of interest" description="RED subdomain" evidence="3">
    <location>
        <begin position="83"/>
        <end position="131"/>
    </location>
</feature>
<feature type="region of interest" description="Transcription repression">
    <location>
        <begin position="278"/>
        <end position="349"/>
    </location>
</feature>
<feature type="splice variant" id="VSP_002363" description="In isoform B and isoform D." evidence="5">
    <location>
        <begin position="146"/>
        <end position="187"/>
    </location>
</feature>
<feature type="splice variant" id="VSP_002364" description="In isoform C and isoform D." evidence="4 5">
    <original>WFSNRRA</original>
    <variation>SELWNTV</variation>
    <location>
        <begin position="217"/>
        <end position="223"/>
    </location>
</feature>
<feature type="splice variant" id="VSP_002365" description="In isoform C and isoform D." evidence="4 5">
    <location>
        <begin position="224"/>
        <end position="349"/>
    </location>
</feature>
<accession>O88436</accession>
<accession>O88437</accession>
<accession>O88438</accession>
<accession>O88439</accession>
<sequence>MQQDGLSSVNQLGGLFVNGRPLPLDTRQQIVQLAIRGMRPCDISRSLKVSNGCVSKILGRYYRTGVLEPKGIGGSKPRLATPAVVARIAQLKDEYPALFAWEIQRQLCAEGLCTQDKAPSVSSINRVLRALQEDQRLHWTQLRSPAVLAPALPSPHSNCEAPRGPHPGTSHRNRTIFSPGQAEALEKEFQRGQYPDSVVRGKLAAATSLPEDTVRVWFSNRRAKWRRQEKLKWETQMPGASQDLMVPKDSPGIISAQQSPGSVPSAALPVLEQLNPSFCQLCWGAVPDRCSSDTTSQACLQPYWECHSLLPVASSSYMEFAWPCLTTHPVHHLIGGPGQAPSTYYLHWP</sequence>
<gene>
    <name type="primary">Pax4</name>
</gene>